<comment type="function">
    <text evidence="1">Catalyzes the attachment of alanine to tRNA(Ala) in a two-step reaction: alanine is first activated by ATP to form Ala-AMP and then transferred to the acceptor end of tRNA(Ala). Also edits incorrectly charged Ser-tRNA(Ala) and Gly-tRNA(Ala) via its editing domain.</text>
</comment>
<comment type="catalytic activity">
    <reaction evidence="1">
        <text>tRNA(Ala) + L-alanine + ATP = L-alanyl-tRNA(Ala) + AMP + diphosphate</text>
        <dbReference type="Rhea" id="RHEA:12540"/>
        <dbReference type="Rhea" id="RHEA-COMP:9657"/>
        <dbReference type="Rhea" id="RHEA-COMP:9923"/>
        <dbReference type="ChEBI" id="CHEBI:30616"/>
        <dbReference type="ChEBI" id="CHEBI:33019"/>
        <dbReference type="ChEBI" id="CHEBI:57972"/>
        <dbReference type="ChEBI" id="CHEBI:78442"/>
        <dbReference type="ChEBI" id="CHEBI:78497"/>
        <dbReference type="ChEBI" id="CHEBI:456215"/>
        <dbReference type="EC" id="6.1.1.7"/>
    </reaction>
</comment>
<comment type="cofactor">
    <cofactor evidence="1">
        <name>Zn(2+)</name>
        <dbReference type="ChEBI" id="CHEBI:29105"/>
    </cofactor>
    <text evidence="1">Binds 1 zinc ion per subunit.</text>
</comment>
<comment type="subcellular location">
    <subcellularLocation>
        <location evidence="1">Cytoplasm</location>
    </subcellularLocation>
</comment>
<comment type="domain">
    <text evidence="1">Consists of three domains; the N-terminal catalytic domain, the editing domain and the C-terminal C-Ala domain. The editing domain removes incorrectly charged amino acids, while the C-Ala domain, along with tRNA(Ala), serves as a bridge to cooperatively bring together the editing and aminoacylation centers thus stimulating deacylation of misacylated tRNAs.</text>
</comment>
<comment type="similarity">
    <text evidence="1">Belongs to the class-II aminoacyl-tRNA synthetase family.</text>
</comment>
<accession>O84754</accession>
<organism>
    <name type="scientific">Chlamydia trachomatis serovar D (strain ATCC VR-885 / DSM 19411 / UW-3/Cx)</name>
    <dbReference type="NCBI Taxonomy" id="272561"/>
    <lineage>
        <taxon>Bacteria</taxon>
        <taxon>Pseudomonadati</taxon>
        <taxon>Chlamydiota</taxon>
        <taxon>Chlamydiia</taxon>
        <taxon>Chlamydiales</taxon>
        <taxon>Chlamydiaceae</taxon>
        <taxon>Chlamydia/Chlamydophila group</taxon>
        <taxon>Chlamydia</taxon>
    </lineage>
</organism>
<name>SYA_CHLTR</name>
<evidence type="ECO:0000255" key="1">
    <source>
        <dbReference type="HAMAP-Rule" id="MF_00036"/>
    </source>
</evidence>
<reference key="1">
    <citation type="journal article" date="1998" name="Science">
        <title>Genome sequence of an obligate intracellular pathogen of humans: Chlamydia trachomatis.</title>
        <authorList>
            <person name="Stephens R.S."/>
            <person name="Kalman S."/>
            <person name="Lammel C.J."/>
            <person name="Fan J."/>
            <person name="Marathe R."/>
            <person name="Aravind L."/>
            <person name="Mitchell W.P."/>
            <person name="Olinger L."/>
            <person name="Tatusov R.L."/>
            <person name="Zhao Q."/>
            <person name="Koonin E.V."/>
            <person name="Davis R.W."/>
        </authorList>
    </citation>
    <scope>NUCLEOTIDE SEQUENCE [LARGE SCALE GENOMIC DNA]</scope>
    <source>
        <strain>ATCC VR-885 / DSM 19411 / UW-3/Cx</strain>
    </source>
</reference>
<proteinExistence type="inferred from homology"/>
<keyword id="KW-0030">Aminoacyl-tRNA synthetase</keyword>
<keyword id="KW-0067">ATP-binding</keyword>
<keyword id="KW-0963">Cytoplasm</keyword>
<keyword id="KW-0436">Ligase</keyword>
<keyword id="KW-0479">Metal-binding</keyword>
<keyword id="KW-0547">Nucleotide-binding</keyword>
<keyword id="KW-0648">Protein biosynthesis</keyword>
<keyword id="KW-1185">Reference proteome</keyword>
<keyword id="KW-0694">RNA-binding</keyword>
<keyword id="KW-0820">tRNA-binding</keyword>
<keyword id="KW-0862">Zinc</keyword>
<feature type="chain" id="PRO_0000075088" description="Alanine--tRNA ligase">
    <location>
        <begin position="1"/>
        <end position="875"/>
    </location>
</feature>
<feature type="binding site" evidence="1">
    <location>
        <position position="561"/>
    </location>
    <ligand>
        <name>Zn(2+)</name>
        <dbReference type="ChEBI" id="CHEBI:29105"/>
    </ligand>
</feature>
<feature type="binding site" evidence="1">
    <location>
        <position position="565"/>
    </location>
    <ligand>
        <name>Zn(2+)</name>
        <dbReference type="ChEBI" id="CHEBI:29105"/>
    </ligand>
</feature>
<feature type="binding site" evidence="1">
    <location>
        <position position="663"/>
    </location>
    <ligand>
        <name>Zn(2+)</name>
        <dbReference type="ChEBI" id="CHEBI:29105"/>
    </ligand>
</feature>
<feature type="binding site" evidence="1">
    <location>
        <position position="667"/>
    </location>
    <ligand>
        <name>Zn(2+)</name>
        <dbReference type="ChEBI" id="CHEBI:29105"/>
    </ligand>
</feature>
<protein>
    <recommendedName>
        <fullName evidence="1">Alanine--tRNA ligase</fullName>
        <ecNumber evidence="1">6.1.1.7</ecNumber>
    </recommendedName>
    <alternativeName>
        <fullName evidence="1">Alanyl-tRNA synthetase</fullName>
        <shortName evidence="1">AlaRS</shortName>
    </alternativeName>
</protein>
<sequence length="875" mass="97671">MLSNTLRSNFLKFYANRNHTPVASSPVFPHNDPSILFTNAGMNQFKNIFLGKEQTSYTRATTSQKCIRAGGKHNDLENVGHTSRHLTFFEMLGNFSFGDYFKQDAISFAWEVSLSIFNFDPDFIYATVHEKDDEAFALWEKYLPTDRIFRLTDKDNFWSMADTGPCGFCSELLFDRGEKFGKAASPLEDVDGERFLEYWNLVFMEFNRTSDGTLLALQKKCVDTGAGLERLVSLLAETETVFEADVLRHLISKIENLSGTTYSPTEAKGAAFRVIADHIRSLSFAIADGLLPGNTERGYVLRKILRRAVNYGKRLGFNRPFLADVVPSLVDVMGEAYPELSASVTQIQEVLTTEEEHFFKTLQRGGNLLQQVLKSSASSAKISGEDAFKLKDTYGLPIDEIALLAKDYNYAIDMDTFEKLEVEAKERSRKNTKKTKNDSDSVFQDLDPTNTSEFIGYDTLSCDTFIEGIIKYNEIASSLEEGDEGAIILRTTPFYAGKGGQIGDSGEIFCESGTFLVSHTIAPKAGLIVHLGKLSQGSLTTTMAVTAQVNQNLRKKTANNHTGCHLLHKALEMTLGEHIRQAGSYVDSQKIRLDFTHNKALSPEDLLAIETLVNEKIRENDPVTIREVLYSDVMSSSEIKQFFGDKYGDIVRVVSAGFSHELCGGTHAQATGDIGYFRITKEHAVATGIRRIEATTGEDAENIAREQDVDLNEIATVIQSPKDQILVKIRSVMEEKKDLAKQVADLENQLVQQQVKTLLTSCEKICDTSYLVYYLTEEEGQRIQHYANAIHKEIPTNFISLWITEKNGRYIVLSRVSDDLTKRGVQAHTLLAELLAPYGGRCGGKAISAQGSSAELPQIEFLNKTLRQWISTQLA</sequence>
<gene>
    <name evidence="1" type="primary">alaS</name>
    <name type="ordered locus">CT_749</name>
</gene>
<dbReference type="EC" id="6.1.1.7" evidence="1"/>
<dbReference type="EMBL" id="AE001273">
    <property type="protein sequence ID" value="AAC68344.2"/>
    <property type="molecule type" value="Genomic_DNA"/>
</dbReference>
<dbReference type="PIR" id="E71476">
    <property type="entry name" value="E71476"/>
</dbReference>
<dbReference type="RefSeq" id="NP_220268.1">
    <property type="nucleotide sequence ID" value="NC_000117.1"/>
</dbReference>
<dbReference type="RefSeq" id="WP_010725333.1">
    <property type="nucleotide sequence ID" value="NC_000117.1"/>
</dbReference>
<dbReference type="SMR" id="O84754"/>
<dbReference type="FunCoup" id="O84754">
    <property type="interactions" value="268"/>
</dbReference>
<dbReference type="STRING" id="272561.CT_749"/>
<dbReference type="EnsemblBacteria" id="AAC68344">
    <property type="protein sequence ID" value="AAC68344"/>
    <property type="gene ID" value="CT_749"/>
</dbReference>
<dbReference type="GeneID" id="884543"/>
<dbReference type="KEGG" id="ctr:CT_749"/>
<dbReference type="PATRIC" id="fig|272561.5.peg.823"/>
<dbReference type="HOGENOM" id="CLU_004485_1_1_0"/>
<dbReference type="InParanoid" id="O84754"/>
<dbReference type="OrthoDB" id="9803884at2"/>
<dbReference type="Proteomes" id="UP000000431">
    <property type="component" value="Chromosome"/>
</dbReference>
<dbReference type="GO" id="GO:0005829">
    <property type="term" value="C:cytosol"/>
    <property type="evidence" value="ECO:0000318"/>
    <property type="project" value="GO_Central"/>
</dbReference>
<dbReference type="GO" id="GO:0004813">
    <property type="term" value="F:alanine-tRNA ligase activity"/>
    <property type="evidence" value="ECO:0000318"/>
    <property type="project" value="GO_Central"/>
</dbReference>
<dbReference type="GO" id="GO:0002161">
    <property type="term" value="F:aminoacyl-tRNA deacylase activity"/>
    <property type="evidence" value="ECO:0000318"/>
    <property type="project" value="GO_Central"/>
</dbReference>
<dbReference type="GO" id="GO:0005524">
    <property type="term" value="F:ATP binding"/>
    <property type="evidence" value="ECO:0007669"/>
    <property type="project" value="UniProtKB-UniRule"/>
</dbReference>
<dbReference type="GO" id="GO:0000049">
    <property type="term" value="F:tRNA binding"/>
    <property type="evidence" value="ECO:0007669"/>
    <property type="project" value="UniProtKB-KW"/>
</dbReference>
<dbReference type="GO" id="GO:0008270">
    <property type="term" value="F:zinc ion binding"/>
    <property type="evidence" value="ECO:0007669"/>
    <property type="project" value="UniProtKB-UniRule"/>
</dbReference>
<dbReference type="GO" id="GO:0006419">
    <property type="term" value="P:alanyl-tRNA aminoacylation"/>
    <property type="evidence" value="ECO:0000318"/>
    <property type="project" value="GO_Central"/>
</dbReference>
<dbReference type="CDD" id="cd00673">
    <property type="entry name" value="AlaRS_core"/>
    <property type="match status" value="1"/>
</dbReference>
<dbReference type="FunFam" id="2.40.30.130:FF:000001">
    <property type="entry name" value="Alanine--tRNA ligase"/>
    <property type="match status" value="1"/>
</dbReference>
<dbReference type="FunFam" id="3.30.930.10:FF:000004">
    <property type="entry name" value="Alanine--tRNA ligase"/>
    <property type="match status" value="1"/>
</dbReference>
<dbReference type="FunFam" id="3.30.980.10:FF:000004">
    <property type="entry name" value="Alanine--tRNA ligase, cytoplasmic"/>
    <property type="match status" value="1"/>
</dbReference>
<dbReference type="Gene3D" id="2.40.30.130">
    <property type="match status" value="1"/>
</dbReference>
<dbReference type="Gene3D" id="3.10.310.40">
    <property type="match status" value="1"/>
</dbReference>
<dbReference type="Gene3D" id="3.30.54.20">
    <property type="match status" value="1"/>
</dbReference>
<dbReference type="Gene3D" id="6.10.250.550">
    <property type="match status" value="1"/>
</dbReference>
<dbReference type="Gene3D" id="3.30.930.10">
    <property type="entry name" value="Bira Bifunctional Protein, Domain 2"/>
    <property type="match status" value="1"/>
</dbReference>
<dbReference type="Gene3D" id="3.30.980.10">
    <property type="entry name" value="Threonyl-trna Synthetase, Chain A, domain 2"/>
    <property type="match status" value="1"/>
</dbReference>
<dbReference type="HAMAP" id="MF_00036_B">
    <property type="entry name" value="Ala_tRNA_synth_B"/>
    <property type="match status" value="1"/>
</dbReference>
<dbReference type="InterPro" id="IPR045864">
    <property type="entry name" value="aa-tRNA-synth_II/BPL/LPL"/>
</dbReference>
<dbReference type="InterPro" id="IPR002318">
    <property type="entry name" value="Ala-tRNA-lgiase_IIc"/>
</dbReference>
<dbReference type="InterPro" id="IPR018162">
    <property type="entry name" value="Ala-tRNA-ligase_IIc_anticod-bd"/>
</dbReference>
<dbReference type="InterPro" id="IPR018165">
    <property type="entry name" value="Ala-tRNA-synth_IIc_core"/>
</dbReference>
<dbReference type="InterPro" id="IPR018164">
    <property type="entry name" value="Ala-tRNA-synth_IIc_N"/>
</dbReference>
<dbReference type="InterPro" id="IPR050058">
    <property type="entry name" value="Ala-tRNA_ligase"/>
</dbReference>
<dbReference type="InterPro" id="IPR023033">
    <property type="entry name" value="Ala_tRNA_ligase_euk/bac"/>
</dbReference>
<dbReference type="InterPro" id="IPR003156">
    <property type="entry name" value="DHHA1_dom"/>
</dbReference>
<dbReference type="InterPro" id="IPR018163">
    <property type="entry name" value="Thr/Ala-tRNA-synth_IIc_edit"/>
</dbReference>
<dbReference type="InterPro" id="IPR009000">
    <property type="entry name" value="Transl_B-barrel_sf"/>
</dbReference>
<dbReference type="InterPro" id="IPR012947">
    <property type="entry name" value="tRNA_SAD"/>
</dbReference>
<dbReference type="NCBIfam" id="TIGR00344">
    <property type="entry name" value="alaS"/>
    <property type="match status" value="1"/>
</dbReference>
<dbReference type="PANTHER" id="PTHR11777:SF9">
    <property type="entry name" value="ALANINE--TRNA LIGASE, CYTOPLASMIC"/>
    <property type="match status" value="1"/>
</dbReference>
<dbReference type="PANTHER" id="PTHR11777">
    <property type="entry name" value="ALANYL-TRNA SYNTHETASE"/>
    <property type="match status" value="1"/>
</dbReference>
<dbReference type="Pfam" id="PF02272">
    <property type="entry name" value="DHHA1"/>
    <property type="match status" value="1"/>
</dbReference>
<dbReference type="Pfam" id="PF01411">
    <property type="entry name" value="tRNA-synt_2c"/>
    <property type="match status" value="1"/>
</dbReference>
<dbReference type="Pfam" id="PF07973">
    <property type="entry name" value="tRNA_SAD"/>
    <property type="match status" value="1"/>
</dbReference>
<dbReference type="PRINTS" id="PR00980">
    <property type="entry name" value="TRNASYNTHALA"/>
</dbReference>
<dbReference type="SMART" id="SM00863">
    <property type="entry name" value="tRNA_SAD"/>
    <property type="match status" value="1"/>
</dbReference>
<dbReference type="SUPFAM" id="SSF55681">
    <property type="entry name" value="Class II aaRS and biotin synthetases"/>
    <property type="match status" value="1"/>
</dbReference>
<dbReference type="SUPFAM" id="SSF101353">
    <property type="entry name" value="Putative anticodon-binding domain of alanyl-tRNA synthetase (AlaRS)"/>
    <property type="match status" value="1"/>
</dbReference>
<dbReference type="SUPFAM" id="SSF55186">
    <property type="entry name" value="ThrRS/AlaRS common domain"/>
    <property type="match status" value="1"/>
</dbReference>
<dbReference type="SUPFAM" id="SSF50447">
    <property type="entry name" value="Translation proteins"/>
    <property type="match status" value="1"/>
</dbReference>
<dbReference type="PROSITE" id="PS50860">
    <property type="entry name" value="AA_TRNA_LIGASE_II_ALA"/>
    <property type="match status" value="1"/>
</dbReference>